<protein>
    <recommendedName>
        <fullName evidence="1">2-C-methyl-D-erythritol 2,4-cyclodiphosphate synthase</fullName>
        <shortName evidence="1">MECDP-synthase</shortName>
        <shortName evidence="1">MECPP-synthase</shortName>
        <shortName evidence="1">MECPS</shortName>
        <ecNumber evidence="1">4.6.1.12</ecNumber>
    </recommendedName>
</protein>
<accession>Q9KUJ1</accession>
<name>ISPF_VIBCH</name>
<proteinExistence type="inferred from homology"/>
<feature type="chain" id="PRO_0000189514" description="2-C-methyl-D-erythritol 2,4-cyclodiphosphate synthase">
    <location>
        <begin position="1"/>
        <end position="158"/>
    </location>
</feature>
<feature type="binding site" evidence="1">
    <location>
        <begin position="9"/>
        <end position="11"/>
    </location>
    <ligand>
        <name>4-CDP-2-C-methyl-D-erythritol 2-phosphate</name>
        <dbReference type="ChEBI" id="CHEBI:57919"/>
    </ligand>
</feature>
<feature type="binding site" evidence="1">
    <location>
        <position position="9"/>
    </location>
    <ligand>
        <name>a divalent metal cation</name>
        <dbReference type="ChEBI" id="CHEBI:60240"/>
    </ligand>
</feature>
<feature type="binding site" evidence="1">
    <location>
        <position position="11"/>
    </location>
    <ligand>
        <name>a divalent metal cation</name>
        <dbReference type="ChEBI" id="CHEBI:60240"/>
    </ligand>
</feature>
<feature type="binding site" evidence="1">
    <location>
        <begin position="35"/>
        <end position="36"/>
    </location>
    <ligand>
        <name>4-CDP-2-C-methyl-D-erythritol 2-phosphate</name>
        <dbReference type="ChEBI" id="CHEBI:57919"/>
    </ligand>
</feature>
<feature type="binding site" evidence="1">
    <location>
        <position position="43"/>
    </location>
    <ligand>
        <name>a divalent metal cation</name>
        <dbReference type="ChEBI" id="CHEBI:60240"/>
    </ligand>
</feature>
<feature type="binding site" evidence="1">
    <location>
        <begin position="57"/>
        <end position="59"/>
    </location>
    <ligand>
        <name>4-CDP-2-C-methyl-D-erythritol 2-phosphate</name>
        <dbReference type="ChEBI" id="CHEBI:57919"/>
    </ligand>
</feature>
<feature type="binding site" evidence="1">
    <location>
        <begin position="62"/>
        <end position="66"/>
    </location>
    <ligand>
        <name>4-CDP-2-C-methyl-D-erythritol 2-phosphate</name>
        <dbReference type="ChEBI" id="CHEBI:57919"/>
    </ligand>
</feature>
<feature type="binding site" evidence="1">
    <location>
        <begin position="101"/>
        <end position="107"/>
    </location>
    <ligand>
        <name>4-CDP-2-C-methyl-D-erythritol 2-phosphate</name>
        <dbReference type="ChEBI" id="CHEBI:57919"/>
    </ligand>
</feature>
<feature type="binding site" evidence="1">
    <location>
        <begin position="133"/>
        <end position="136"/>
    </location>
    <ligand>
        <name>4-CDP-2-C-methyl-D-erythritol 2-phosphate</name>
        <dbReference type="ChEBI" id="CHEBI:57919"/>
    </ligand>
</feature>
<feature type="binding site" evidence="1">
    <location>
        <position position="140"/>
    </location>
    <ligand>
        <name>4-CDP-2-C-methyl-D-erythritol 2-phosphate</name>
        <dbReference type="ChEBI" id="CHEBI:57919"/>
    </ligand>
</feature>
<feature type="binding site" evidence="1">
    <location>
        <position position="143"/>
    </location>
    <ligand>
        <name>4-CDP-2-C-methyl-D-erythritol 2-phosphate</name>
        <dbReference type="ChEBI" id="CHEBI:57919"/>
    </ligand>
</feature>
<feature type="site" description="Transition state stabilizer" evidence="1">
    <location>
        <position position="35"/>
    </location>
</feature>
<feature type="site" description="Transition state stabilizer" evidence="1">
    <location>
        <position position="134"/>
    </location>
</feature>
<reference key="1">
    <citation type="journal article" date="2000" name="Nature">
        <title>DNA sequence of both chromosomes of the cholera pathogen Vibrio cholerae.</title>
        <authorList>
            <person name="Heidelberg J.F."/>
            <person name="Eisen J.A."/>
            <person name="Nelson W.C."/>
            <person name="Clayton R.A."/>
            <person name="Gwinn M.L."/>
            <person name="Dodson R.J."/>
            <person name="Haft D.H."/>
            <person name="Hickey E.K."/>
            <person name="Peterson J.D."/>
            <person name="Umayam L.A."/>
            <person name="Gill S.R."/>
            <person name="Nelson K.E."/>
            <person name="Read T.D."/>
            <person name="Tettelin H."/>
            <person name="Richardson D.L."/>
            <person name="Ermolaeva M.D."/>
            <person name="Vamathevan J.J."/>
            <person name="Bass S."/>
            <person name="Qin H."/>
            <person name="Dragoi I."/>
            <person name="Sellers P."/>
            <person name="McDonald L.A."/>
            <person name="Utterback T.R."/>
            <person name="Fleischmann R.D."/>
            <person name="Nierman W.C."/>
            <person name="White O."/>
            <person name="Salzberg S.L."/>
            <person name="Smith H.O."/>
            <person name="Colwell R.R."/>
            <person name="Mekalanos J.J."/>
            <person name="Venter J.C."/>
            <person name="Fraser C.M."/>
        </authorList>
    </citation>
    <scope>NUCLEOTIDE SEQUENCE [LARGE SCALE GENOMIC DNA]</scope>
    <source>
        <strain>ATCC 39315 / El Tor Inaba N16961</strain>
    </source>
</reference>
<gene>
    <name evidence="1" type="primary">ispF</name>
    <name type="ordered locus">VC_0529</name>
</gene>
<sequence length="158" mass="16837">MIRIGHGFDVHRFGGEGPIIIGGVKIPYEQGLIAHSDGDVALHALSDALLGAIAAGDIGRHFPDTDDKWKGADSRELLKDVYRRVKAQGYVLGNADVTIIAQAPKMAPYIQAMCAAIAEDLETDLGNINVKATTTEKLGFTGRKEGIACEAVVLLRKA</sequence>
<keyword id="KW-0414">Isoprene biosynthesis</keyword>
<keyword id="KW-0456">Lyase</keyword>
<keyword id="KW-0479">Metal-binding</keyword>
<keyword id="KW-1185">Reference proteome</keyword>
<evidence type="ECO:0000255" key="1">
    <source>
        <dbReference type="HAMAP-Rule" id="MF_00107"/>
    </source>
</evidence>
<organism>
    <name type="scientific">Vibrio cholerae serotype O1 (strain ATCC 39315 / El Tor Inaba N16961)</name>
    <dbReference type="NCBI Taxonomy" id="243277"/>
    <lineage>
        <taxon>Bacteria</taxon>
        <taxon>Pseudomonadati</taxon>
        <taxon>Pseudomonadota</taxon>
        <taxon>Gammaproteobacteria</taxon>
        <taxon>Vibrionales</taxon>
        <taxon>Vibrionaceae</taxon>
        <taxon>Vibrio</taxon>
    </lineage>
</organism>
<dbReference type="EC" id="4.6.1.12" evidence="1"/>
<dbReference type="EMBL" id="AE003852">
    <property type="protein sequence ID" value="AAF93697.1"/>
    <property type="molecule type" value="Genomic_DNA"/>
</dbReference>
<dbReference type="PIR" id="D82311">
    <property type="entry name" value="D82311"/>
</dbReference>
<dbReference type="RefSeq" id="NP_230180.1">
    <property type="nucleotide sequence ID" value="NC_002505.1"/>
</dbReference>
<dbReference type="RefSeq" id="WP_000619209.1">
    <property type="nucleotide sequence ID" value="NZ_LT906614.1"/>
</dbReference>
<dbReference type="SMR" id="Q9KUJ1"/>
<dbReference type="STRING" id="243277.VC_0529"/>
<dbReference type="DNASU" id="2615820"/>
<dbReference type="EnsemblBacteria" id="AAF93697">
    <property type="protein sequence ID" value="AAF93697"/>
    <property type="gene ID" value="VC_0529"/>
</dbReference>
<dbReference type="KEGG" id="vch:VC_0529"/>
<dbReference type="PATRIC" id="fig|243277.26.peg.505"/>
<dbReference type="eggNOG" id="COG0245">
    <property type="taxonomic scope" value="Bacteria"/>
</dbReference>
<dbReference type="HOGENOM" id="CLU_084630_2_0_6"/>
<dbReference type="UniPathway" id="UPA00056">
    <property type="reaction ID" value="UER00095"/>
</dbReference>
<dbReference type="Proteomes" id="UP000000584">
    <property type="component" value="Chromosome 1"/>
</dbReference>
<dbReference type="GO" id="GO:0008685">
    <property type="term" value="F:2-C-methyl-D-erythritol 2,4-cyclodiphosphate synthase activity"/>
    <property type="evidence" value="ECO:0000318"/>
    <property type="project" value="GO_Central"/>
</dbReference>
<dbReference type="GO" id="GO:0046872">
    <property type="term" value="F:metal ion binding"/>
    <property type="evidence" value="ECO:0007669"/>
    <property type="project" value="UniProtKB-KW"/>
</dbReference>
<dbReference type="GO" id="GO:0019288">
    <property type="term" value="P:isopentenyl diphosphate biosynthetic process, methylerythritol 4-phosphate pathway"/>
    <property type="evidence" value="ECO:0007669"/>
    <property type="project" value="UniProtKB-UniRule"/>
</dbReference>
<dbReference type="GO" id="GO:0016114">
    <property type="term" value="P:terpenoid biosynthetic process"/>
    <property type="evidence" value="ECO:0007669"/>
    <property type="project" value="InterPro"/>
</dbReference>
<dbReference type="CDD" id="cd00554">
    <property type="entry name" value="MECDP_synthase"/>
    <property type="match status" value="1"/>
</dbReference>
<dbReference type="FunFam" id="3.30.1330.50:FF:000001">
    <property type="entry name" value="2-C-methyl-D-erythritol 2,4-cyclodiphosphate synthase"/>
    <property type="match status" value="1"/>
</dbReference>
<dbReference type="Gene3D" id="3.30.1330.50">
    <property type="entry name" value="2-C-methyl-D-erythritol 2,4-cyclodiphosphate synthase"/>
    <property type="match status" value="1"/>
</dbReference>
<dbReference type="HAMAP" id="MF_00107">
    <property type="entry name" value="IspF"/>
    <property type="match status" value="1"/>
</dbReference>
<dbReference type="InterPro" id="IPR003526">
    <property type="entry name" value="MECDP_synthase"/>
</dbReference>
<dbReference type="InterPro" id="IPR020555">
    <property type="entry name" value="MECDP_synthase_CS"/>
</dbReference>
<dbReference type="InterPro" id="IPR036571">
    <property type="entry name" value="MECDP_synthase_sf"/>
</dbReference>
<dbReference type="NCBIfam" id="TIGR00151">
    <property type="entry name" value="ispF"/>
    <property type="match status" value="1"/>
</dbReference>
<dbReference type="PANTHER" id="PTHR43181">
    <property type="entry name" value="2-C-METHYL-D-ERYTHRITOL 2,4-CYCLODIPHOSPHATE SYNTHASE, CHLOROPLASTIC"/>
    <property type="match status" value="1"/>
</dbReference>
<dbReference type="PANTHER" id="PTHR43181:SF1">
    <property type="entry name" value="2-C-METHYL-D-ERYTHRITOL 2,4-CYCLODIPHOSPHATE SYNTHASE, CHLOROPLASTIC"/>
    <property type="match status" value="1"/>
</dbReference>
<dbReference type="Pfam" id="PF02542">
    <property type="entry name" value="YgbB"/>
    <property type="match status" value="1"/>
</dbReference>
<dbReference type="SUPFAM" id="SSF69765">
    <property type="entry name" value="IpsF-like"/>
    <property type="match status" value="1"/>
</dbReference>
<dbReference type="PROSITE" id="PS01350">
    <property type="entry name" value="ISPF"/>
    <property type="match status" value="1"/>
</dbReference>
<comment type="function">
    <text evidence="1">Involved in the biosynthesis of isopentenyl diphosphate (IPP) and dimethylallyl diphosphate (DMAPP), two major building blocks of isoprenoid compounds. Catalyzes the conversion of 4-diphosphocytidyl-2-C-methyl-D-erythritol 2-phosphate (CDP-ME2P) to 2-C-methyl-D-erythritol 2,4-cyclodiphosphate (ME-CPP) with a corresponding release of cytidine 5-monophosphate (CMP).</text>
</comment>
<comment type="catalytic activity">
    <reaction evidence="1">
        <text>4-CDP-2-C-methyl-D-erythritol 2-phosphate = 2-C-methyl-D-erythritol 2,4-cyclic diphosphate + CMP</text>
        <dbReference type="Rhea" id="RHEA:23864"/>
        <dbReference type="ChEBI" id="CHEBI:57919"/>
        <dbReference type="ChEBI" id="CHEBI:58483"/>
        <dbReference type="ChEBI" id="CHEBI:60377"/>
        <dbReference type="EC" id="4.6.1.12"/>
    </reaction>
</comment>
<comment type="cofactor">
    <cofactor evidence="1">
        <name>a divalent metal cation</name>
        <dbReference type="ChEBI" id="CHEBI:60240"/>
    </cofactor>
    <text evidence="1">Binds 1 divalent metal cation per subunit.</text>
</comment>
<comment type="pathway">
    <text evidence="1">Isoprenoid biosynthesis; isopentenyl diphosphate biosynthesis via DXP pathway; isopentenyl diphosphate from 1-deoxy-D-xylulose 5-phosphate: step 4/6.</text>
</comment>
<comment type="subunit">
    <text evidence="1">Homotrimer.</text>
</comment>
<comment type="similarity">
    <text evidence="1">Belongs to the IspF family.</text>
</comment>